<dbReference type="EC" id="2.7.4.22" evidence="1"/>
<dbReference type="EMBL" id="CP000512">
    <property type="protein sequence ID" value="ABM32409.1"/>
    <property type="molecule type" value="Genomic_DNA"/>
</dbReference>
<dbReference type="RefSeq" id="WP_011794955.1">
    <property type="nucleotide sequence ID" value="NC_008752.1"/>
</dbReference>
<dbReference type="SMR" id="A1TN71"/>
<dbReference type="STRING" id="397945.Aave_1825"/>
<dbReference type="GeneID" id="79793166"/>
<dbReference type="KEGG" id="aav:Aave_1825"/>
<dbReference type="eggNOG" id="COG0528">
    <property type="taxonomic scope" value="Bacteria"/>
</dbReference>
<dbReference type="HOGENOM" id="CLU_033861_0_0_4"/>
<dbReference type="OrthoDB" id="9807458at2"/>
<dbReference type="UniPathway" id="UPA00159">
    <property type="reaction ID" value="UER00275"/>
</dbReference>
<dbReference type="Proteomes" id="UP000002596">
    <property type="component" value="Chromosome"/>
</dbReference>
<dbReference type="GO" id="GO:0005829">
    <property type="term" value="C:cytosol"/>
    <property type="evidence" value="ECO:0007669"/>
    <property type="project" value="TreeGrafter"/>
</dbReference>
<dbReference type="GO" id="GO:0005524">
    <property type="term" value="F:ATP binding"/>
    <property type="evidence" value="ECO:0007669"/>
    <property type="project" value="UniProtKB-KW"/>
</dbReference>
<dbReference type="GO" id="GO:0033862">
    <property type="term" value="F:UMP kinase activity"/>
    <property type="evidence" value="ECO:0007669"/>
    <property type="project" value="UniProtKB-EC"/>
</dbReference>
<dbReference type="GO" id="GO:0044210">
    <property type="term" value="P:'de novo' CTP biosynthetic process"/>
    <property type="evidence" value="ECO:0007669"/>
    <property type="project" value="UniProtKB-UniRule"/>
</dbReference>
<dbReference type="GO" id="GO:0006225">
    <property type="term" value="P:UDP biosynthetic process"/>
    <property type="evidence" value="ECO:0007669"/>
    <property type="project" value="TreeGrafter"/>
</dbReference>
<dbReference type="CDD" id="cd04254">
    <property type="entry name" value="AAK_UMPK-PyrH-Ec"/>
    <property type="match status" value="1"/>
</dbReference>
<dbReference type="FunFam" id="3.40.1160.10:FF:000001">
    <property type="entry name" value="Uridylate kinase"/>
    <property type="match status" value="1"/>
</dbReference>
<dbReference type="Gene3D" id="3.40.1160.10">
    <property type="entry name" value="Acetylglutamate kinase-like"/>
    <property type="match status" value="1"/>
</dbReference>
<dbReference type="HAMAP" id="MF_01220_B">
    <property type="entry name" value="PyrH_B"/>
    <property type="match status" value="1"/>
</dbReference>
<dbReference type="InterPro" id="IPR036393">
    <property type="entry name" value="AceGlu_kinase-like_sf"/>
</dbReference>
<dbReference type="InterPro" id="IPR001048">
    <property type="entry name" value="Asp/Glu/Uridylate_kinase"/>
</dbReference>
<dbReference type="InterPro" id="IPR011817">
    <property type="entry name" value="Uridylate_kinase"/>
</dbReference>
<dbReference type="InterPro" id="IPR015963">
    <property type="entry name" value="Uridylate_kinase_bac"/>
</dbReference>
<dbReference type="NCBIfam" id="TIGR02075">
    <property type="entry name" value="pyrH_bact"/>
    <property type="match status" value="1"/>
</dbReference>
<dbReference type="PANTHER" id="PTHR42833">
    <property type="entry name" value="URIDYLATE KINASE"/>
    <property type="match status" value="1"/>
</dbReference>
<dbReference type="PANTHER" id="PTHR42833:SF4">
    <property type="entry name" value="URIDYLATE KINASE PUMPKIN, CHLOROPLASTIC"/>
    <property type="match status" value="1"/>
</dbReference>
<dbReference type="Pfam" id="PF00696">
    <property type="entry name" value="AA_kinase"/>
    <property type="match status" value="1"/>
</dbReference>
<dbReference type="PIRSF" id="PIRSF005650">
    <property type="entry name" value="Uridylate_kin"/>
    <property type="match status" value="1"/>
</dbReference>
<dbReference type="SUPFAM" id="SSF53633">
    <property type="entry name" value="Carbamate kinase-like"/>
    <property type="match status" value="1"/>
</dbReference>
<name>PYRH_PARC0</name>
<accession>A1TN71</accession>
<proteinExistence type="inferred from homology"/>
<reference key="1">
    <citation type="submission" date="2006-12" db="EMBL/GenBank/DDBJ databases">
        <title>Complete sequence of Acidovorax avenae subsp. citrulli AAC00-1.</title>
        <authorList>
            <person name="Copeland A."/>
            <person name="Lucas S."/>
            <person name="Lapidus A."/>
            <person name="Barry K."/>
            <person name="Detter J.C."/>
            <person name="Glavina del Rio T."/>
            <person name="Dalin E."/>
            <person name="Tice H."/>
            <person name="Pitluck S."/>
            <person name="Kiss H."/>
            <person name="Brettin T."/>
            <person name="Bruce D."/>
            <person name="Han C."/>
            <person name="Tapia R."/>
            <person name="Gilna P."/>
            <person name="Schmutz J."/>
            <person name="Larimer F."/>
            <person name="Land M."/>
            <person name="Hauser L."/>
            <person name="Kyrpides N."/>
            <person name="Kim E."/>
            <person name="Stahl D."/>
            <person name="Richardson P."/>
        </authorList>
    </citation>
    <scope>NUCLEOTIDE SEQUENCE [LARGE SCALE GENOMIC DNA]</scope>
    <source>
        <strain>AAC00-1</strain>
    </source>
</reference>
<evidence type="ECO:0000255" key="1">
    <source>
        <dbReference type="HAMAP-Rule" id="MF_01220"/>
    </source>
</evidence>
<sequence>MSVAAPAHKRILLKLSGEALMGDDAFGINRATIVRMVEEIAEVTRMGVQVAVVIGGGNIFRGVAGGSVGMDRATADYMGMLATVMNALALADAMDKQGLIARVMSAIGIEQVVEPYVRPKALQYLEEGKVVVFAAGTGNPFFTTDTAAALRGAEIGAEVVLKATKVDGVYTADPKKDPTATRYTKLTFDEAMSRNLGILDATAFALCRDQKLPIRVFSIVKHGALKRVVMGEDEGTLVYA</sequence>
<keyword id="KW-0067">ATP-binding</keyword>
<keyword id="KW-0963">Cytoplasm</keyword>
<keyword id="KW-0418">Kinase</keyword>
<keyword id="KW-0547">Nucleotide-binding</keyword>
<keyword id="KW-0665">Pyrimidine biosynthesis</keyword>
<keyword id="KW-0808">Transferase</keyword>
<comment type="function">
    <text evidence="1">Catalyzes the reversible phosphorylation of UMP to UDP.</text>
</comment>
<comment type="catalytic activity">
    <reaction evidence="1">
        <text>UMP + ATP = UDP + ADP</text>
        <dbReference type="Rhea" id="RHEA:24400"/>
        <dbReference type="ChEBI" id="CHEBI:30616"/>
        <dbReference type="ChEBI" id="CHEBI:57865"/>
        <dbReference type="ChEBI" id="CHEBI:58223"/>
        <dbReference type="ChEBI" id="CHEBI:456216"/>
        <dbReference type="EC" id="2.7.4.22"/>
    </reaction>
</comment>
<comment type="activity regulation">
    <text evidence="1">Inhibited by UTP.</text>
</comment>
<comment type="pathway">
    <text evidence="1">Pyrimidine metabolism; CTP biosynthesis via de novo pathway; UDP from UMP (UMPK route): step 1/1.</text>
</comment>
<comment type="subunit">
    <text evidence="1">Homohexamer.</text>
</comment>
<comment type="subcellular location">
    <subcellularLocation>
        <location evidence="1">Cytoplasm</location>
    </subcellularLocation>
</comment>
<comment type="similarity">
    <text evidence="1">Belongs to the UMP kinase family.</text>
</comment>
<protein>
    <recommendedName>
        <fullName evidence="1">Uridylate kinase</fullName>
        <shortName evidence="1">UK</shortName>
        <ecNumber evidence="1">2.7.4.22</ecNumber>
    </recommendedName>
    <alternativeName>
        <fullName evidence="1">Uridine monophosphate kinase</fullName>
        <shortName evidence="1">UMP kinase</shortName>
        <shortName evidence="1">UMPK</shortName>
    </alternativeName>
</protein>
<feature type="chain" id="PRO_0000323776" description="Uridylate kinase">
    <location>
        <begin position="1"/>
        <end position="240"/>
    </location>
</feature>
<feature type="binding site" evidence="1">
    <location>
        <begin position="14"/>
        <end position="17"/>
    </location>
    <ligand>
        <name>ATP</name>
        <dbReference type="ChEBI" id="CHEBI:30616"/>
    </ligand>
</feature>
<feature type="binding site" evidence="1">
    <location>
        <position position="56"/>
    </location>
    <ligand>
        <name>UMP</name>
        <dbReference type="ChEBI" id="CHEBI:57865"/>
    </ligand>
</feature>
<feature type="binding site" evidence="1">
    <location>
        <position position="57"/>
    </location>
    <ligand>
        <name>ATP</name>
        <dbReference type="ChEBI" id="CHEBI:30616"/>
    </ligand>
</feature>
<feature type="binding site" evidence="1">
    <location>
        <position position="61"/>
    </location>
    <ligand>
        <name>ATP</name>
        <dbReference type="ChEBI" id="CHEBI:30616"/>
    </ligand>
</feature>
<feature type="binding site" evidence="1">
    <location>
        <position position="76"/>
    </location>
    <ligand>
        <name>UMP</name>
        <dbReference type="ChEBI" id="CHEBI:57865"/>
    </ligand>
</feature>
<feature type="binding site" evidence="1">
    <location>
        <begin position="137"/>
        <end position="144"/>
    </location>
    <ligand>
        <name>UMP</name>
        <dbReference type="ChEBI" id="CHEBI:57865"/>
    </ligand>
</feature>
<feature type="binding site" evidence="1">
    <location>
        <position position="164"/>
    </location>
    <ligand>
        <name>ATP</name>
        <dbReference type="ChEBI" id="CHEBI:30616"/>
    </ligand>
</feature>
<feature type="binding site" evidence="1">
    <location>
        <position position="170"/>
    </location>
    <ligand>
        <name>ATP</name>
        <dbReference type="ChEBI" id="CHEBI:30616"/>
    </ligand>
</feature>
<feature type="binding site" evidence="1">
    <location>
        <position position="173"/>
    </location>
    <ligand>
        <name>ATP</name>
        <dbReference type="ChEBI" id="CHEBI:30616"/>
    </ligand>
</feature>
<organism>
    <name type="scientific">Paracidovorax citrulli (strain AAC00-1)</name>
    <name type="common">Acidovorax citrulli</name>
    <dbReference type="NCBI Taxonomy" id="397945"/>
    <lineage>
        <taxon>Bacteria</taxon>
        <taxon>Pseudomonadati</taxon>
        <taxon>Pseudomonadota</taxon>
        <taxon>Betaproteobacteria</taxon>
        <taxon>Burkholderiales</taxon>
        <taxon>Comamonadaceae</taxon>
        <taxon>Paracidovorax</taxon>
    </lineage>
</organism>
<gene>
    <name evidence="1" type="primary">pyrH</name>
    <name type="ordered locus">Aave_1825</name>
</gene>